<name>YABR_BACSU</name>
<protein>
    <recommendedName>
        <fullName>Uncharacterized protein YabR</fullName>
    </recommendedName>
</protein>
<sequence>MSIEVGSKLQGKITGITNFGAFVELPGGSTGLVHISEVADNYVKDINDHLKVGDQVEVKVINVEKDGKIGLSIKKAKDRPQARPRNDFRPKESFEQKMNKFLKDSEDRLSSLKRNTESKRGGRGARRG</sequence>
<dbReference type="EMBL" id="L23497">
    <property type="protein sequence ID" value="AAB38380.1"/>
    <property type="molecule type" value="Genomic_DNA"/>
</dbReference>
<dbReference type="EMBL" id="D26185">
    <property type="protein sequence ID" value="BAA05298.1"/>
    <property type="molecule type" value="Genomic_DNA"/>
</dbReference>
<dbReference type="EMBL" id="AL009126">
    <property type="protein sequence ID" value="CAB11839.1"/>
    <property type="molecule type" value="Genomic_DNA"/>
</dbReference>
<dbReference type="PIR" id="C53380">
    <property type="entry name" value="C53380"/>
</dbReference>
<dbReference type="RefSeq" id="NP_387944.1">
    <property type="nucleotide sequence ID" value="NC_000964.3"/>
</dbReference>
<dbReference type="RefSeq" id="WP_003218379.1">
    <property type="nucleotide sequence ID" value="NZ_OZ025638.1"/>
</dbReference>
<dbReference type="SMR" id="P37560"/>
<dbReference type="FunCoup" id="P37560">
    <property type="interactions" value="10"/>
</dbReference>
<dbReference type="STRING" id="224308.BSU00630"/>
<dbReference type="PaxDb" id="224308-BSU00630"/>
<dbReference type="EnsemblBacteria" id="CAB11839">
    <property type="protein sequence ID" value="CAB11839"/>
    <property type="gene ID" value="BSU_00630"/>
</dbReference>
<dbReference type="GeneID" id="936574"/>
<dbReference type="KEGG" id="bsu:BSU00630"/>
<dbReference type="PATRIC" id="fig|224308.179.peg.63"/>
<dbReference type="eggNOG" id="COG1098">
    <property type="taxonomic scope" value="Bacteria"/>
</dbReference>
<dbReference type="InParanoid" id="P37560"/>
<dbReference type="OrthoDB" id="9810507at2"/>
<dbReference type="PhylomeDB" id="P37560"/>
<dbReference type="BioCyc" id="BSUB:BSU00630-MONOMER"/>
<dbReference type="PRO" id="PR:P37560"/>
<dbReference type="Proteomes" id="UP000001570">
    <property type="component" value="Chromosome"/>
</dbReference>
<dbReference type="GO" id="GO:0003676">
    <property type="term" value="F:nucleic acid binding"/>
    <property type="evidence" value="ECO:0007669"/>
    <property type="project" value="InterPro"/>
</dbReference>
<dbReference type="CDD" id="cd05692">
    <property type="entry name" value="S1_RPS1_repeat_hs4"/>
    <property type="match status" value="1"/>
</dbReference>
<dbReference type="FunFam" id="2.40.50.140:FF:000059">
    <property type="entry name" value="S1 RNA binding protein"/>
    <property type="match status" value="1"/>
</dbReference>
<dbReference type="Gene3D" id="2.40.50.140">
    <property type="entry name" value="Nucleic acid-binding proteins"/>
    <property type="match status" value="1"/>
</dbReference>
<dbReference type="InterPro" id="IPR012340">
    <property type="entry name" value="NA-bd_OB-fold"/>
</dbReference>
<dbReference type="InterPro" id="IPR050437">
    <property type="entry name" value="Ribos_protein_bS1-like"/>
</dbReference>
<dbReference type="InterPro" id="IPR003029">
    <property type="entry name" value="S1_domain"/>
</dbReference>
<dbReference type="NCBIfam" id="NF006363">
    <property type="entry name" value="PRK08582.1"/>
    <property type="match status" value="1"/>
</dbReference>
<dbReference type="PANTHER" id="PTHR10724">
    <property type="entry name" value="30S RIBOSOMAL PROTEIN S1"/>
    <property type="match status" value="1"/>
</dbReference>
<dbReference type="Pfam" id="PF00575">
    <property type="entry name" value="S1"/>
    <property type="match status" value="1"/>
</dbReference>
<dbReference type="SMART" id="SM00316">
    <property type="entry name" value="S1"/>
    <property type="match status" value="1"/>
</dbReference>
<dbReference type="SUPFAM" id="SSF50249">
    <property type="entry name" value="Nucleic acid-binding proteins"/>
    <property type="match status" value="1"/>
</dbReference>
<dbReference type="PROSITE" id="PS50126">
    <property type="entry name" value="S1"/>
    <property type="match status" value="1"/>
</dbReference>
<gene>
    <name type="primary">yabR</name>
    <name type="ordered locus">BSU00630</name>
</gene>
<organism>
    <name type="scientific">Bacillus subtilis (strain 168)</name>
    <dbReference type="NCBI Taxonomy" id="224308"/>
    <lineage>
        <taxon>Bacteria</taxon>
        <taxon>Bacillati</taxon>
        <taxon>Bacillota</taxon>
        <taxon>Bacilli</taxon>
        <taxon>Bacillales</taxon>
        <taxon>Bacillaceae</taxon>
        <taxon>Bacillus</taxon>
    </lineage>
</organism>
<proteinExistence type="inferred from homology"/>
<comment type="similarity">
    <text evidence="3">Belongs to the peptidase U57 family.</text>
</comment>
<reference key="1">
    <citation type="journal article" date="1994" name="J. Bacteriol.">
        <title>Characterization of a cell division gene from Bacillus subtilis that is required for vegetative and sporulation septum formation.</title>
        <authorList>
            <person name="Levin P.A."/>
            <person name="Losick R."/>
        </authorList>
    </citation>
    <scope>NUCLEOTIDE SEQUENCE [GENOMIC DNA]</scope>
    <source>
        <strain>168</strain>
    </source>
</reference>
<reference key="2">
    <citation type="journal article" date="1994" name="DNA Res.">
        <title>Systematic sequencing of the 180 kilobase region of the Bacillus subtilis chromosome containing the replication origin.</title>
        <authorList>
            <person name="Ogasawara N."/>
            <person name="Nakai S."/>
            <person name="Yoshikawa H."/>
        </authorList>
    </citation>
    <scope>NUCLEOTIDE SEQUENCE [GENOMIC DNA]</scope>
    <source>
        <strain>168</strain>
    </source>
</reference>
<reference key="3">
    <citation type="journal article" date="1997" name="Nature">
        <title>The complete genome sequence of the Gram-positive bacterium Bacillus subtilis.</title>
        <authorList>
            <person name="Kunst F."/>
            <person name="Ogasawara N."/>
            <person name="Moszer I."/>
            <person name="Albertini A.M."/>
            <person name="Alloni G."/>
            <person name="Azevedo V."/>
            <person name="Bertero M.G."/>
            <person name="Bessieres P."/>
            <person name="Bolotin A."/>
            <person name="Borchert S."/>
            <person name="Borriss R."/>
            <person name="Boursier L."/>
            <person name="Brans A."/>
            <person name="Braun M."/>
            <person name="Brignell S.C."/>
            <person name="Bron S."/>
            <person name="Brouillet S."/>
            <person name="Bruschi C.V."/>
            <person name="Caldwell B."/>
            <person name="Capuano V."/>
            <person name="Carter N.M."/>
            <person name="Choi S.-K."/>
            <person name="Codani J.-J."/>
            <person name="Connerton I.F."/>
            <person name="Cummings N.J."/>
            <person name="Daniel R.A."/>
            <person name="Denizot F."/>
            <person name="Devine K.M."/>
            <person name="Duesterhoeft A."/>
            <person name="Ehrlich S.D."/>
            <person name="Emmerson P.T."/>
            <person name="Entian K.-D."/>
            <person name="Errington J."/>
            <person name="Fabret C."/>
            <person name="Ferrari E."/>
            <person name="Foulger D."/>
            <person name="Fritz C."/>
            <person name="Fujita M."/>
            <person name="Fujita Y."/>
            <person name="Fuma S."/>
            <person name="Galizzi A."/>
            <person name="Galleron N."/>
            <person name="Ghim S.-Y."/>
            <person name="Glaser P."/>
            <person name="Goffeau A."/>
            <person name="Golightly E.J."/>
            <person name="Grandi G."/>
            <person name="Guiseppi G."/>
            <person name="Guy B.J."/>
            <person name="Haga K."/>
            <person name="Haiech J."/>
            <person name="Harwood C.R."/>
            <person name="Henaut A."/>
            <person name="Hilbert H."/>
            <person name="Holsappel S."/>
            <person name="Hosono S."/>
            <person name="Hullo M.-F."/>
            <person name="Itaya M."/>
            <person name="Jones L.-M."/>
            <person name="Joris B."/>
            <person name="Karamata D."/>
            <person name="Kasahara Y."/>
            <person name="Klaerr-Blanchard M."/>
            <person name="Klein C."/>
            <person name="Kobayashi Y."/>
            <person name="Koetter P."/>
            <person name="Koningstein G."/>
            <person name="Krogh S."/>
            <person name="Kumano M."/>
            <person name="Kurita K."/>
            <person name="Lapidus A."/>
            <person name="Lardinois S."/>
            <person name="Lauber J."/>
            <person name="Lazarevic V."/>
            <person name="Lee S.-M."/>
            <person name="Levine A."/>
            <person name="Liu H."/>
            <person name="Masuda S."/>
            <person name="Mauel C."/>
            <person name="Medigue C."/>
            <person name="Medina N."/>
            <person name="Mellado R.P."/>
            <person name="Mizuno M."/>
            <person name="Moestl D."/>
            <person name="Nakai S."/>
            <person name="Noback M."/>
            <person name="Noone D."/>
            <person name="O'Reilly M."/>
            <person name="Ogawa K."/>
            <person name="Ogiwara A."/>
            <person name="Oudega B."/>
            <person name="Park S.-H."/>
            <person name="Parro V."/>
            <person name="Pohl T.M."/>
            <person name="Portetelle D."/>
            <person name="Porwollik S."/>
            <person name="Prescott A.M."/>
            <person name="Presecan E."/>
            <person name="Pujic P."/>
            <person name="Purnelle B."/>
            <person name="Rapoport G."/>
            <person name="Rey M."/>
            <person name="Reynolds S."/>
            <person name="Rieger M."/>
            <person name="Rivolta C."/>
            <person name="Rocha E."/>
            <person name="Roche B."/>
            <person name="Rose M."/>
            <person name="Sadaie Y."/>
            <person name="Sato T."/>
            <person name="Scanlan E."/>
            <person name="Schleich S."/>
            <person name="Schroeter R."/>
            <person name="Scoffone F."/>
            <person name="Sekiguchi J."/>
            <person name="Sekowska A."/>
            <person name="Seror S.J."/>
            <person name="Serror P."/>
            <person name="Shin B.-S."/>
            <person name="Soldo B."/>
            <person name="Sorokin A."/>
            <person name="Tacconi E."/>
            <person name="Takagi T."/>
            <person name="Takahashi H."/>
            <person name="Takemaru K."/>
            <person name="Takeuchi M."/>
            <person name="Tamakoshi A."/>
            <person name="Tanaka T."/>
            <person name="Terpstra P."/>
            <person name="Tognoni A."/>
            <person name="Tosato V."/>
            <person name="Uchiyama S."/>
            <person name="Vandenbol M."/>
            <person name="Vannier F."/>
            <person name="Vassarotti A."/>
            <person name="Viari A."/>
            <person name="Wambutt R."/>
            <person name="Wedler E."/>
            <person name="Wedler H."/>
            <person name="Weitzenegger T."/>
            <person name="Winters P."/>
            <person name="Wipat A."/>
            <person name="Yamamoto H."/>
            <person name="Yamane K."/>
            <person name="Yasumoto K."/>
            <person name="Yata K."/>
            <person name="Yoshida K."/>
            <person name="Yoshikawa H.-F."/>
            <person name="Zumstein E."/>
            <person name="Yoshikawa H."/>
            <person name="Danchin A."/>
        </authorList>
    </citation>
    <scope>NUCLEOTIDE SEQUENCE [LARGE SCALE GENOMIC DNA]</scope>
    <source>
        <strain>168</strain>
    </source>
</reference>
<accession>P37560</accession>
<evidence type="ECO:0000255" key="1">
    <source>
        <dbReference type="PROSITE-ProRule" id="PRU00180"/>
    </source>
</evidence>
<evidence type="ECO:0000256" key="2">
    <source>
        <dbReference type="SAM" id="MobiDB-lite"/>
    </source>
</evidence>
<evidence type="ECO:0000305" key="3"/>
<keyword id="KW-1185">Reference proteome</keyword>
<feature type="chain" id="PRO_0000049446" description="Uncharacterized protein YabR">
    <location>
        <begin position="1"/>
        <end position="128"/>
    </location>
</feature>
<feature type="domain" description="S1 motif" evidence="1">
    <location>
        <begin position="6"/>
        <end position="74"/>
    </location>
</feature>
<feature type="region of interest" description="Disordered" evidence="2">
    <location>
        <begin position="72"/>
        <end position="128"/>
    </location>
</feature>
<feature type="compositionally biased region" description="Basic and acidic residues" evidence="2">
    <location>
        <begin position="78"/>
        <end position="120"/>
    </location>
</feature>